<reference key="1">
    <citation type="journal article" date="2005" name="Genome Res.">
        <title>Sequence, annotation, and analysis of synteny between rice chromosome 3 and diverged grass species.</title>
        <authorList>
            <consortium name="The rice chromosome 3 sequencing consortium"/>
            <person name="Buell C.R."/>
            <person name="Yuan Q."/>
            <person name="Ouyang S."/>
            <person name="Liu J."/>
            <person name="Zhu W."/>
            <person name="Wang A."/>
            <person name="Maiti R."/>
            <person name="Haas B."/>
            <person name="Wortman J."/>
            <person name="Pertea M."/>
            <person name="Jones K.M."/>
            <person name="Kim M."/>
            <person name="Overton L."/>
            <person name="Tsitrin T."/>
            <person name="Fadrosh D."/>
            <person name="Bera J."/>
            <person name="Weaver B."/>
            <person name="Jin S."/>
            <person name="Johri S."/>
            <person name="Reardon M."/>
            <person name="Webb K."/>
            <person name="Hill J."/>
            <person name="Moffat K."/>
            <person name="Tallon L."/>
            <person name="Van Aken S."/>
            <person name="Lewis M."/>
            <person name="Utterback T."/>
            <person name="Feldblyum T."/>
            <person name="Zismann V."/>
            <person name="Iobst S."/>
            <person name="Hsiao J."/>
            <person name="de Vazeille A.R."/>
            <person name="Salzberg S.L."/>
            <person name="White O."/>
            <person name="Fraser C.M."/>
            <person name="Yu Y."/>
            <person name="Kim H."/>
            <person name="Rambo T."/>
            <person name="Currie J."/>
            <person name="Collura K."/>
            <person name="Kernodle-Thompson S."/>
            <person name="Wei F."/>
            <person name="Kudrna K."/>
            <person name="Ammiraju J.S.S."/>
            <person name="Luo M."/>
            <person name="Goicoechea J.L."/>
            <person name="Wing R.A."/>
            <person name="Henry D."/>
            <person name="Oates R."/>
            <person name="Palmer M."/>
            <person name="Pries G."/>
            <person name="Saski C."/>
            <person name="Simmons J."/>
            <person name="Soderlund C."/>
            <person name="Nelson W."/>
            <person name="de la Bastide M."/>
            <person name="Spiegel L."/>
            <person name="Nascimento L."/>
            <person name="Huang E."/>
            <person name="Preston R."/>
            <person name="Zutavern T."/>
            <person name="Palmer L."/>
            <person name="O'Shaughnessy A."/>
            <person name="Dike S."/>
            <person name="McCombie W.R."/>
            <person name="Minx P."/>
            <person name="Cordum H."/>
            <person name="Wilson R."/>
            <person name="Jin W."/>
            <person name="Lee H.R."/>
            <person name="Jiang J."/>
            <person name="Jackson S."/>
        </authorList>
    </citation>
    <scope>NUCLEOTIDE SEQUENCE [LARGE SCALE GENOMIC DNA]</scope>
    <source>
        <strain>cv. Nipponbare</strain>
    </source>
</reference>
<reference key="2">
    <citation type="journal article" date="2005" name="Nature">
        <title>The map-based sequence of the rice genome.</title>
        <authorList>
            <consortium name="International rice genome sequencing project (IRGSP)"/>
        </authorList>
    </citation>
    <scope>NUCLEOTIDE SEQUENCE [LARGE SCALE GENOMIC DNA]</scope>
    <source>
        <strain>cv. Nipponbare</strain>
    </source>
</reference>
<reference key="3">
    <citation type="journal article" date="2008" name="Nucleic Acids Res.">
        <title>The rice annotation project database (RAP-DB): 2008 update.</title>
        <authorList>
            <consortium name="The rice annotation project (RAP)"/>
        </authorList>
    </citation>
    <scope>GENOME REANNOTATION</scope>
    <source>
        <strain>cv. Nipponbare</strain>
    </source>
</reference>
<reference key="4">
    <citation type="journal article" date="2013" name="Rice">
        <title>Improvement of the Oryza sativa Nipponbare reference genome using next generation sequence and optical map data.</title>
        <authorList>
            <person name="Kawahara Y."/>
            <person name="de la Bastide M."/>
            <person name="Hamilton J.P."/>
            <person name="Kanamori H."/>
            <person name="McCombie W.R."/>
            <person name="Ouyang S."/>
            <person name="Schwartz D.C."/>
            <person name="Tanaka T."/>
            <person name="Wu J."/>
            <person name="Zhou S."/>
            <person name="Childs K.L."/>
            <person name="Davidson R.M."/>
            <person name="Lin H."/>
            <person name="Quesada-Ocampo L."/>
            <person name="Vaillancourt B."/>
            <person name="Sakai H."/>
            <person name="Lee S.S."/>
            <person name="Kim J."/>
            <person name="Numa H."/>
            <person name="Itoh T."/>
            <person name="Buell C.R."/>
            <person name="Matsumoto T."/>
        </authorList>
    </citation>
    <scope>GENOME REANNOTATION</scope>
    <source>
        <strain>cv. Nipponbare</strain>
    </source>
</reference>
<reference key="5">
    <citation type="journal article" date="2005" name="PLoS Biol.">
        <title>The genomes of Oryza sativa: a history of duplications.</title>
        <authorList>
            <person name="Yu J."/>
            <person name="Wang J."/>
            <person name="Lin W."/>
            <person name="Li S."/>
            <person name="Li H."/>
            <person name="Zhou J."/>
            <person name="Ni P."/>
            <person name="Dong W."/>
            <person name="Hu S."/>
            <person name="Zeng C."/>
            <person name="Zhang J."/>
            <person name="Zhang Y."/>
            <person name="Li R."/>
            <person name="Xu Z."/>
            <person name="Li S."/>
            <person name="Li X."/>
            <person name="Zheng H."/>
            <person name="Cong L."/>
            <person name="Lin L."/>
            <person name="Yin J."/>
            <person name="Geng J."/>
            <person name="Li G."/>
            <person name="Shi J."/>
            <person name="Liu J."/>
            <person name="Lv H."/>
            <person name="Li J."/>
            <person name="Wang J."/>
            <person name="Deng Y."/>
            <person name="Ran L."/>
            <person name="Shi X."/>
            <person name="Wang X."/>
            <person name="Wu Q."/>
            <person name="Li C."/>
            <person name="Ren X."/>
            <person name="Wang J."/>
            <person name="Wang X."/>
            <person name="Li D."/>
            <person name="Liu D."/>
            <person name="Zhang X."/>
            <person name="Ji Z."/>
            <person name="Zhao W."/>
            <person name="Sun Y."/>
            <person name="Zhang Z."/>
            <person name="Bao J."/>
            <person name="Han Y."/>
            <person name="Dong L."/>
            <person name="Ji J."/>
            <person name="Chen P."/>
            <person name="Wu S."/>
            <person name="Liu J."/>
            <person name="Xiao Y."/>
            <person name="Bu D."/>
            <person name="Tan J."/>
            <person name="Yang L."/>
            <person name="Ye C."/>
            <person name="Zhang J."/>
            <person name="Xu J."/>
            <person name="Zhou Y."/>
            <person name="Yu Y."/>
            <person name="Zhang B."/>
            <person name="Zhuang S."/>
            <person name="Wei H."/>
            <person name="Liu B."/>
            <person name="Lei M."/>
            <person name="Yu H."/>
            <person name="Li Y."/>
            <person name="Xu H."/>
            <person name="Wei S."/>
            <person name="He X."/>
            <person name="Fang L."/>
            <person name="Zhang Z."/>
            <person name="Zhang Y."/>
            <person name="Huang X."/>
            <person name="Su Z."/>
            <person name="Tong W."/>
            <person name="Li J."/>
            <person name="Tong Z."/>
            <person name="Li S."/>
            <person name="Ye J."/>
            <person name="Wang L."/>
            <person name="Fang L."/>
            <person name="Lei T."/>
            <person name="Chen C.-S."/>
            <person name="Chen H.-C."/>
            <person name="Xu Z."/>
            <person name="Li H."/>
            <person name="Huang H."/>
            <person name="Zhang F."/>
            <person name="Xu H."/>
            <person name="Li N."/>
            <person name="Zhao C."/>
            <person name="Li S."/>
            <person name="Dong L."/>
            <person name="Huang Y."/>
            <person name="Li L."/>
            <person name="Xi Y."/>
            <person name="Qi Q."/>
            <person name="Li W."/>
            <person name="Zhang B."/>
            <person name="Hu W."/>
            <person name="Zhang Y."/>
            <person name="Tian X."/>
            <person name="Jiao Y."/>
            <person name="Liang X."/>
            <person name="Jin J."/>
            <person name="Gao L."/>
            <person name="Zheng W."/>
            <person name="Hao B."/>
            <person name="Liu S.-M."/>
            <person name="Wang W."/>
            <person name="Yuan L."/>
            <person name="Cao M."/>
            <person name="McDermott J."/>
            <person name="Samudrala R."/>
            <person name="Wang J."/>
            <person name="Wong G.K.-S."/>
            <person name="Yang H."/>
        </authorList>
    </citation>
    <scope>NUCLEOTIDE SEQUENCE [LARGE SCALE GENOMIC DNA]</scope>
    <source>
        <strain>cv. Nipponbare</strain>
    </source>
</reference>
<reference key="6">
    <citation type="journal article" date="2010" name="Nature">
        <title>Sugar transporters for intercellular exchange and nutrition of pathogens.</title>
        <authorList>
            <person name="Chen L.-Q."/>
            <person name="Hou B.-H."/>
            <person name="Lalonde S."/>
            <person name="Takanaga H."/>
            <person name="Hartung M.L."/>
            <person name="Qu X.-Q."/>
            <person name="Guo W.-J."/>
            <person name="Kim J.-G."/>
            <person name="Underwood W."/>
            <person name="Chaudhuri B."/>
            <person name="Chermak D."/>
            <person name="Antony G."/>
            <person name="White F.F."/>
            <person name="Somerville S.C."/>
            <person name="Mudgett M.B."/>
            <person name="Frommer W.B."/>
        </authorList>
    </citation>
    <scope>GENE FAMILY</scope>
    <scope>NOMENCLATURE</scope>
</reference>
<comment type="function">
    <text evidence="1">Mediates both low-affinity uptake and efflux of sugar across the plasma membrane.</text>
</comment>
<comment type="subunit">
    <text evidence="1">Forms homooligomers and/or heterooligomers.</text>
</comment>
<comment type="subcellular location">
    <subcellularLocation>
        <location evidence="1">Cell membrane</location>
        <topology evidence="1">Multi-pass membrane protein</topology>
    </subcellularLocation>
</comment>
<comment type="similarity">
    <text evidence="4">Belongs to the SWEET sugar transporter family.</text>
</comment>
<gene>
    <name type="primary">SWEET16</name>
    <name type="ordered locus">Os03g0341300</name>
    <name type="ordered locus">LOC_Os03g22200</name>
    <name type="ORF">OsJ_10795</name>
</gene>
<name>SWT16_ORYSJ</name>
<protein>
    <recommendedName>
        <fullName>Bidirectional sugar transporter SWEET16</fullName>
        <shortName>OsSWEET16</shortName>
    </recommendedName>
</protein>
<feature type="chain" id="PRO_0000404138" description="Bidirectional sugar transporter SWEET16">
    <location>
        <begin position="1"/>
        <end position="328"/>
    </location>
</feature>
<feature type="topological domain" description="Extracellular" evidence="2">
    <location>
        <begin position="1"/>
        <end position="5"/>
    </location>
</feature>
<feature type="transmembrane region" description="Helical; Name=1" evidence="2">
    <location>
        <begin position="6"/>
        <end position="26"/>
    </location>
</feature>
<feature type="topological domain" description="Cytoplasmic" evidence="2">
    <location>
        <begin position="27"/>
        <end position="38"/>
    </location>
</feature>
<feature type="transmembrane region" description="Helical; Name=2" evidence="2">
    <location>
        <begin position="39"/>
        <end position="56"/>
    </location>
</feature>
<feature type="topological domain" description="Extracellular" evidence="2">
    <location>
        <begin position="57"/>
        <end position="63"/>
    </location>
</feature>
<feature type="transmembrane region" description="Helical; Name=3" evidence="2">
    <location>
        <begin position="64"/>
        <end position="84"/>
    </location>
</feature>
<feature type="topological domain" description="Cytoplasmic" evidence="2">
    <location>
        <begin position="85"/>
        <end position="99"/>
    </location>
</feature>
<feature type="transmembrane region" description="Helical; Name=4" evidence="2">
    <location>
        <begin position="100"/>
        <end position="120"/>
    </location>
</feature>
<feature type="topological domain" description="Extracellular" evidence="2">
    <location>
        <begin position="121"/>
        <end position="125"/>
    </location>
</feature>
<feature type="transmembrane region" description="Helical; Name=5" evidence="2">
    <location>
        <begin position="126"/>
        <end position="146"/>
    </location>
</feature>
<feature type="topological domain" description="Cytoplasmic" evidence="2">
    <location>
        <begin position="147"/>
        <end position="161"/>
    </location>
</feature>
<feature type="transmembrane region" description="Helical; Name=6" evidence="2">
    <location>
        <begin position="162"/>
        <end position="182"/>
    </location>
</feature>
<feature type="topological domain" description="Extracellular" evidence="2">
    <location>
        <begin position="183"/>
        <end position="185"/>
    </location>
</feature>
<feature type="transmembrane region" description="Helical; Name=7" evidence="2">
    <location>
        <begin position="186"/>
        <end position="206"/>
    </location>
</feature>
<feature type="topological domain" description="Cytoplasmic" evidence="2">
    <location>
        <begin position="207"/>
        <end position="328"/>
    </location>
</feature>
<feature type="domain" description="MtN3/slv 1">
    <location>
        <begin position="6"/>
        <end position="92"/>
    </location>
</feature>
<feature type="domain" description="MtN3/slv 2">
    <location>
        <begin position="127"/>
        <end position="213"/>
    </location>
</feature>
<feature type="region of interest" description="Disordered" evidence="3">
    <location>
        <begin position="288"/>
        <end position="328"/>
    </location>
</feature>
<feature type="compositionally biased region" description="Basic residues" evidence="3">
    <location>
        <begin position="288"/>
        <end position="299"/>
    </location>
</feature>
<feature type="compositionally biased region" description="Low complexity" evidence="3">
    <location>
        <begin position="312"/>
        <end position="328"/>
    </location>
</feature>
<evidence type="ECO:0000250" key="1">
    <source>
        <dbReference type="UniProtKB" id="Q8L9J7"/>
    </source>
</evidence>
<evidence type="ECO:0000255" key="2"/>
<evidence type="ECO:0000256" key="3">
    <source>
        <dbReference type="SAM" id="MobiDB-lite"/>
    </source>
</evidence>
<evidence type="ECO:0000305" key="4"/>
<keyword id="KW-1003">Cell membrane</keyword>
<keyword id="KW-0472">Membrane</keyword>
<keyword id="KW-1185">Reference proteome</keyword>
<keyword id="KW-0677">Repeat</keyword>
<keyword id="KW-0762">Sugar transport</keyword>
<keyword id="KW-0812">Transmembrane</keyword>
<keyword id="KW-1133">Transmembrane helix</keyword>
<keyword id="KW-0813">Transport</keyword>
<dbReference type="EMBL" id="DP000009">
    <property type="protein sequence ID" value="ABF95863.1"/>
    <property type="molecule type" value="Genomic_DNA"/>
</dbReference>
<dbReference type="EMBL" id="AP008209">
    <property type="protein sequence ID" value="BAF11985.2"/>
    <property type="molecule type" value="Genomic_DNA"/>
</dbReference>
<dbReference type="EMBL" id="AP014959">
    <property type="status" value="NOT_ANNOTATED_CDS"/>
    <property type="molecule type" value="Genomic_DNA"/>
</dbReference>
<dbReference type="EMBL" id="CM000140">
    <property type="protein sequence ID" value="EEE59038.1"/>
    <property type="molecule type" value="Genomic_DNA"/>
</dbReference>
<dbReference type="RefSeq" id="XP_015628835.1">
    <property type="nucleotide sequence ID" value="XM_015773349.1"/>
</dbReference>
<dbReference type="SMR" id="Q10LN5"/>
<dbReference type="FunCoup" id="Q10LN5">
    <property type="interactions" value="560"/>
</dbReference>
<dbReference type="PaxDb" id="39947-Q10LN5"/>
<dbReference type="KEGG" id="dosa:Os03g0341300"/>
<dbReference type="eggNOG" id="KOG1623">
    <property type="taxonomic scope" value="Eukaryota"/>
</dbReference>
<dbReference type="HOGENOM" id="CLU_048643_4_1_1"/>
<dbReference type="InParanoid" id="Q10LN5"/>
<dbReference type="OrthoDB" id="409725at2759"/>
<dbReference type="Proteomes" id="UP000000763">
    <property type="component" value="Chromosome 3"/>
</dbReference>
<dbReference type="Proteomes" id="UP000007752">
    <property type="component" value="Chromosome 3"/>
</dbReference>
<dbReference type="Proteomes" id="UP000059680">
    <property type="component" value="Chromosome 3"/>
</dbReference>
<dbReference type="GO" id="GO:0016020">
    <property type="term" value="C:membrane"/>
    <property type="evidence" value="ECO:0000318"/>
    <property type="project" value="GO_Central"/>
</dbReference>
<dbReference type="GO" id="GO:0005886">
    <property type="term" value="C:plasma membrane"/>
    <property type="evidence" value="ECO:0000250"/>
    <property type="project" value="UniProtKB"/>
</dbReference>
<dbReference type="GO" id="GO:0051119">
    <property type="term" value="F:sugar transmembrane transporter activity"/>
    <property type="evidence" value="ECO:0000250"/>
    <property type="project" value="UniProtKB"/>
</dbReference>
<dbReference type="GO" id="GO:0008643">
    <property type="term" value="P:carbohydrate transport"/>
    <property type="evidence" value="ECO:0000318"/>
    <property type="project" value="GO_Central"/>
</dbReference>
<dbReference type="FunFam" id="1.20.1280.290:FF:000001">
    <property type="entry name" value="Bidirectional sugar transporter SWEET"/>
    <property type="match status" value="1"/>
</dbReference>
<dbReference type="FunFam" id="1.20.1280.290:FF:000002">
    <property type="entry name" value="Bidirectional sugar transporter SWEET"/>
    <property type="match status" value="1"/>
</dbReference>
<dbReference type="Gene3D" id="1.20.1280.290">
    <property type="match status" value="2"/>
</dbReference>
<dbReference type="InterPro" id="IPR047664">
    <property type="entry name" value="SWEET"/>
</dbReference>
<dbReference type="InterPro" id="IPR004316">
    <property type="entry name" value="SWEET_rpt"/>
</dbReference>
<dbReference type="PANTHER" id="PTHR10791:SF142">
    <property type="entry name" value="BIDIRECTIONAL SUGAR TRANSPORTER SWEET16"/>
    <property type="match status" value="1"/>
</dbReference>
<dbReference type="PANTHER" id="PTHR10791">
    <property type="entry name" value="RAG1-ACTIVATING PROTEIN 1"/>
    <property type="match status" value="1"/>
</dbReference>
<dbReference type="Pfam" id="PF03083">
    <property type="entry name" value="MtN3_slv"/>
    <property type="match status" value="2"/>
</dbReference>
<sequence>MADPSFFVGIVGNVISILVFASPIATFRRIVRSKSTEEFRWLPYVTTLLSTSLWTFYGLHKPGGLLIVTVNGSGAALEAIYVTLYLAYAPRETKAKMVKVVLAVNVGALAAVVAVALVALHGGVRLFVVGVLCAALTIGMYAAPMAAMRTVVKTRSVEYMPFSLSFFLFLNGGVWSVYSLLVKDYFIGIPNAIGFALGTAQLALYMAYRRTKKPAGKGGDDDEDDEEAQGVARLMGHQVEMAQQRRDQQLRKGLSLSLPKPAAPLHGGLDRIIKSFSTTPIELHSILHQHHGGHHHHHRFDTVPDDDDEAVAAGGTTPATTAGPGDRH</sequence>
<accession>Q10LN5</accession>
<accession>Q0DS03</accession>
<organism>
    <name type="scientific">Oryza sativa subsp. japonica</name>
    <name type="common">Rice</name>
    <dbReference type="NCBI Taxonomy" id="39947"/>
    <lineage>
        <taxon>Eukaryota</taxon>
        <taxon>Viridiplantae</taxon>
        <taxon>Streptophyta</taxon>
        <taxon>Embryophyta</taxon>
        <taxon>Tracheophyta</taxon>
        <taxon>Spermatophyta</taxon>
        <taxon>Magnoliopsida</taxon>
        <taxon>Liliopsida</taxon>
        <taxon>Poales</taxon>
        <taxon>Poaceae</taxon>
        <taxon>BOP clade</taxon>
        <taxon>Oryzoideae</taxon>
        <taxon>Oryzeae</taxon>
        <taxon>Oryzinae</taxon>
        <taxon>Oryza</taxon>
        <taxon>Oryza sativa</taxon>
    </lineage>
</organism>
<proteinExistence type="inferred from homology"/>